<reference key="1">
    <citation type="journal article" date="2008" name="J. Bacteriol.">
        <title>Insights into the environmental resistance gene pool from the genome sequence of the multidrug-resistant environmental isolate Escherichia coli SMS-3-5.</title>
        <authorList>
            <person name="Fricke W.F."/>
            <person name="Wright M.S."/>
            <person name="Lindell A.H."/>
            <person name="Harkins D.M."/>
            <person name="Baker-Austin C."/>
            <person name="Ravel J."/>
            <person name="Stepanauskas R."/>
        </authorList>
    </citation>
    <scope>NUCLEOTIDE SEQUENCE [LARGE SCALE GENOMIC DNA]</scope>
    <source>
        <strain>SMS-3-5 / SECEC</strain>
    </source>
</reference>
<gene>
    <name evidence="1" type="primary">mutL</name>
    <name type="ordered locus">EcSMS35_4641</name>
</gene>
<proteinExistence type="inferred from homology"/>
<feature type="chain" id="PRO_1000192172" description="DNA mismatch repair protein MutL">
    <location>
        <begin position="1"/>
        <end position="615"/>
    </location>
</feature>
<feature type="region of interest" description="Disordered" evidence="2">
    <location>
        <begin position="369"/>
        <end position="397"/>
    </location>
</feature>
<feature type="compositionally biased region" description="Low complexity" evidence="2">
    <location>
        <begin position="378"/>
        <end position="391"/>
    </location>
</feature>
<accession>B1LQJ0</accession>
<keyword id="KW-0227">DNA damage</keyword>
<keyword id="KW-0234">DNA repair</keyword>
<comment type="function">
    <text evidence="1">This protein is involved in the repair of mismatches in DNA. It is required for dam-dependent methyl-directed DNA mismatch repair. May act as a 'molecular matchmaker', a protein that promotes the formation of a stable complex between two or more DNA-binding proteins in an ATP-dependent manner without itself being part of a final effector complex.</text>
</comment>
<comment type="similarity">
    <text evidence="1">Belongs to the DNA mismatch repair MutL/HexB family.</text>
</comment>
<dbReference type="EMBL" id="CP000970">
    <property type="protein sequence ID" value="ACB17160.1"/>
    <property type="molecule type" value="Genomic_DNA"/>
</dbReference>
<dbReference type="RefSeq" id="WP_001122471.1">
    <property type="nucleotide sequence ID" value="NC_010498.1"/>
</dbReference>
<dbReference type="SMR" id="B1LQJ0"/>
<dbReference type="KEGG" id="ecm:EcSMS35_4641"/>
<dbReference type="HOGENOM" id="CLU_004131_5_1_6"/>
<dbReference type="Proteomes" id="UP000007011">
    <property type="component" value="Chromosome"/>
</dbReference>
<dbReference type="GO" id="GO:0032300">
    <property type="term" value="C:mismatch repair complex"/>
    <property type="evidence" value="ECO:0007669"/>
    <property type="project" value="InterPro"/>
</dbReference>
<dbReference type="GO" id="GO:0005524">
    <property type="term" value="F:ATP binding"/>
    <property type="evidence" value="ECO:0007669"/>
    <property type="project" value="InterPro"/>
</dbReference>
<dbReference type="GO" id="GO:0016887">
    <property type="term" value="F:ATP hydrolysis activity"/>
    <property type="evidence" value="ECO:0007669"/>
    <property type="project" value="InterPro"/>
</dbReference>
<dbReference type="GO" id="GO:0140664">
    <property type="term" value="F:ATP-dependent DNA damage sensor activity"/>
    <property type="evidence" value="ECO:0007669"/>
    <property type="project" value="InterPro"/>
</dbReference>
<dbReference type="GO" id="GO:0030983">
    <property type="term" value="F:mismatched DNA binding"/>
    <property type="evidence" value="ECO:0007669"/>
    <property type="project" value="InterPro"/>
</dbReference>
<dbReference type="GO" id="GO:0006298">
    <property type="term" value="P:mismatch repair"/>
    <property type="evidence" value="ECO:0007669"/>
    <property type="project" value="UniProtKB-UniRule"/>
</dbReference>
<dbReference type="CDD" id="cd16926">
    <property type="entry name" value="HATPase_MutL-MLH-PMS-like"/>
    <property type="match status" value="1"/>
</dbReference>
<dbReference type="CDD" id="cd03482">
    <property type="entry name" value="MutL_Trans_MutL"/>
    <property type="match status" value="1"/>
</dbReference>
<dbReference type="FunFam" id="3.30.230.10:FF:000013">
    <property type="entry name" value="DNA mismatch repair endonuclease MutL"/>
    <property type="match status" value="1"/>
</dbReference>
<dbReference type="FunFam" id="3.30.565.10:FF:000003">
    <property type="entry name" value="DNA mismatch repair endonuclease MutL"/>
    <property type="match status" value="1"/>
</dbReference>
<dbReference type="FunFam" id="3.30.1370.100:FF:000002">
    <property type="entry name" value="DNA mismatch repair protein MutL"/>
    <property type="match status" value="1"/>
</dbReference>
<dbReference type="Gene3D" id="3.30.230.10">
    <property type="match status" value="1"/>
</dbReference>
<dbReference type="Gene3D" id="3.30.565.10">
    <property type="entry name" value="Histidine kinase-like ATPase, C-terminal domain"/>
    <property type="match status" value="1"/>
</dbReference>
<dbReference type="Gene3D" id="3.30.1540.20">
    <property type="entry name" value="MutL, C-terminal domain, dimerisation subdomain"/>
    <property type="match status" value="1"/>
</dbReference>
<dbReference type="Gene3D" id="3.30.1370.100">
    <property type="entry name" value="MutL, C-terminal domain, regulatory subdomain"/>
    <property type="match status" value="1"/>
</dbReference>
<dbReference type="HAMAP" id="MF_00149">
    <property type="entry name" value="DNA_mis_repair"/>
    <property type="match status" value="1"/>
</dbReference>
<dbReference type="InterPro" id="IPR014762">
    <property type="entry name" value="DNA_mismatch_repair_CS"/>
</dbReference>
<dbReference type="InterPro" id="IPR020667">
    <property type="entry name" value="DNA_mismatch_repair_MutL"/>
</dbReference>
<dbReference type="InterPro" id="IPR013507">
    <property type="entry name" value="DNA_mismatch_S5_2-like"/>
</dbReference>
<dbReference type="InterPro" id="IPR036890">
    <property type="entry name" value="HATPase_C_sf"/>
</dbReference>
<dbReference type="InterPro" id="IPR002099">
    <property type="entry name" value="MutL/Mlh/PMS"/>
</dbReference>
<dbReference type="InterPro" id="IPR038973">
    <property type="entry name" value="MutL/Mlh/Pms-like"/>
</dbReference>
<dbReference type="InterPro" id="IPR014790">
    <property type="entry name" value="MutL_C"/>
</dbReference>
<dbReference type="InterPro" id="IPR042120">
    <property type="entry name" value="MutL_C_dimsub"/>
</dbReference>
<dbReference type="InterPro" id="IPR042121">
    <property type="entry name" value="MutL_C_regsub"/>
</dbReference>
<dbReference type="InterPro" id="IPR037198">
    <property type="entry name" value="MutL_C_sf"/>
</dbReference>
<dbReference type="InterPro" id="IPR020568">
    <property type="entry name" value="Ribosomal_Su5_D2-typ_SF"/>
</dbReference>
<dbReference type="InterPro" id="IPR014721">
    <property type="entry name" value="Ribsml_uS5_D2-typ_fold_subgr"/>
</dbReference>
<dbReference type="NCBIfam" id="TIGR00585">
    <property type="entry name" value="mutl"/>
    <property type="match status" value="1"/>
</dbReference>
<dbReference type="NCBIfam" id="NF000948">
    <property type="entry name" value="PRK00095.1-1"/>
    <property type="match status" value="1"/>
</dbReference>
<dbReference type="PANTHER" id="PTHR10073">
    <property type="entry name" value="DNA MISMATCH REPAIR PROTEIN MLH, PMS, MUTL"/>
    <property type="match status" value="1"/>
</dbReference>
<dbReference type="PANTHER" id="PTHR10073:SF12">
    <property type="entry name" value="DNA MISMATCH REPAIR PROTEIN MLH1"/>
    <property type="match status" value="1"/>
</dbReference>
<dbReference type="Pfam" id="PF01119">
    <property type="entry name" value="DNA_mis_repair"/>
    <property type="match status" value="1"/>
</dbReference>
<dbReference type="Pfam" id="PF13589">
    <property type="entry name" value="HATPase_c_3"/>
    <property type="match status" value="1"/>
</dbReference>
<dbReference type="Pfam" id="PF08676">
    <property type="entry name" value="MutL_C"/>
    <property type="match status" value="1"/>
</dbReference>
<dbReference type="SMART" id="SM01340">
    <property type="entry name" value="DNA_mis_repair"/>
    <property type="match status" value="1"/>
</dbReference>
<dbReference type="SMART" id="SM00853">
    <property type="entry name" value="MutL_C"/>
    <property type="match status" value="1"/>
</dbReference>
<dbReference type="SUPFAM" id="SSF55874">
    <property type="entry name" value="ATPase domain of HSP90 chaperone/DNA topoisomerase II/histidine kinase"/>
    <property type="match status" value="1"/>
</dbReference>
<dbReference type="SUPFAM" id="SSF118116">
    <property type="entry name" value="DNA mismatch repair protein MutL"/>
    <property type="match status" value="1"/>
</dbReference>
<dbReference type="SUPFAM" id="SSF54211">
    <property type="entry name" value="Ribosomal protein S5 domain 2-like"/>
    <property type="match status" value="1"/>
</dbReference>
<dbReference type="PROSITE" id="PS00058">
    <property type="entry name" value="DNA_MISMATCH_REPAIR_1"/>
    <property type="match status" value="1"/>
</dbReference>
<sequence>MPIQVLPPQLANQIAAGEVVERPASVVKELVENSLDAGATRIDIDIERGGAKLIRIRDNGCGIKKDELALALARHATSKIASLDDLEAIISLGFRGEALASISSVSRLTLTSRTAEQQEAWQAYAEGRDMDVTVKPAAHPVGTTLEVLDLFYNTPARRKFLRTEKTEFNHIDEIIRRIALARFDVTINLSHNGKIVRQYRAVPEGGQKERRLGAICGTAFLEQALAIEWQHGDLTLRGWVADPNHTTPALAEIQYCYVNGRMMRDRLINHAIRQACEDKLGADQQPAFVLYLEIDPHQVDVNVHPAKHEVRFHQSRLVHDFIYQGVLSVLQQQLETPLPLDDEPQPAPRAIPENRVAAGRNHFAEPAVREPVAPRYTPAPASGSRPAAPWPNAQPGYQKQQGEVYRQLLQTPAPMQKPKAPEPQEPALAANSQSFGRVLTIVHSDCALLERDGNISLLALPVAERWLRQAQLTPGEAPVCAQPLLIPLRLKVSGEEKSALEKAQSALAELGIDFQSDAQHVTIRAVPLPLRQQNLQILIPELIGYLAKQSVFEPGNIAQWIARNLMSEHAQWSMAQAITLLADVERLCPQLVKTPPGGLLQSVDLHPAIKALKDE</sequence>
<protein>
    <recommendedName>
        <fullName evidence="1">DNA mismatch repair protein MutL</fullName>
    </recommendedName>
</protein>
<organism>
    <name type="scientific">Escherichia coli (strain SMS-3-5 / SECEC)</name>
    <dbReference type="NCBI Taxonomy" id="439855"/>
    <lineage>
        <taxon>Bacteria</taxon>
        <taxon>Pseudomonadati</taxon>
        <taxon>Pseudomonadota</taxon>
        <taxon>Gammaproteobacteria</taxon>
        <taxon>Enterobacterales</taxon>
        <taxon>Enterobacteriaceae</taxon>
        <taxon>Escherichia</taxon>
    </lineage>
</organism>
<evidence type="ECO:0000255" key="1">
    <source>
        <dbReference type="HAMAP-Rule" id="MF_00149"/>
    </source>
</evidence>
<evidence type="ECO:0000256" key="2">
    <source>
        <dbReference type="SAM" id="MobiDB-lite"/>
    </source>
</evidence>
<name>MUTL_ECOSM</name>